<dbReference type="EC" id="3.5.1.26"/>
<dbReference type="EMBL" id="AE013599">
    <property type="protein sequence ID" value="AAF58918.5"/>
    <property type="molecule type" value="Genomic_DNA"/>
</dbReference>
<dbReference type="EMBL" id="AY122133">
    <property type="protein sequence ID" value="AAM52645.1"/>
    <property type="molecule type" value="mRNA"/>
</dbReference>
<dbReference type="EMBL" id="BT011404">
    <property type="protein sequence ID" value="AAR96196.1"/>
    <property type="status" value="ALT_SEQ"/>
    <property type="molecule type" value="mRNA"/>
</dbReference>
<dbReference type="RefSeq" id="NP_610504.4">
    <property type="nucleotide sequence ID" value="NM_136660.3"/>
</dbReference>
<dbReference type="SMR" id="Q8MR45"/>
<dbReference type="FunCoup" id="Q8MR45">
    <property type="interactions" value="263"/>
</dbReference>
<dbReference type="STRING" id="7227.FBpp0308484"/>
<dbReference type="MEROPS" id="T02.001"/>
<dbReference type="GlyGen" id="Q8MR45">
    <property type="glycosylation" value="2 sites"/>
</dbReference>
<dbReference type="PaxDb" id="7227-FBpp0271751"/>
<dbReference type="DNASU" id="35989"/>
<dbReference type="EnsemblMetazoa" id="FBtr0339392">
    <property type="protein sequence ID" value="FBpp0308484"/>
    <property type="gene ID" value="FBgn0033431"/>
</dbReference>
<dbReference type="GeneID" id="35989"/>
<dbReference type="KEGG" id="dme:Dmel_CG1827"/>
<dbReference type="UCSC" id="CG1827-RB">
    <property type="organism name" value="d. melanogaster"/>
</dbReference>
<dbReference type="UCSC" id="CG1827-RC">
    <property type="organism name" value="d. melanogaster"/>
</dbReference>
<dbReference type="AGR" id="FB:FBgn0033431"/>
<dbReference type="FlyBase" id="FBgn0033431">
    <property type="gene designation" value="CG1827"/>
</dbReference>
<dbReference type="VEuPathDB" id="VectorBase:FBgn0033431"/>
<dbReference type="eggNOG" id="KOG1593">
    <property type="taxonomic scope" value="Eukaryota"/>
</dbReference>
<dbReference type="GeneTree" id="ENSGT00950000183045"/>
<dbReference type="HOGENOM" id="CLU_021603_0_0_1"/>
<dbReference type="InParanoid" id="Q8MR45"/>
<dbReference type="OMA" id="YKPIINI"/>
<dbReference type="OrthoDB" id="188713at2759"/>
<dbReference type="PhylomeDB" id="Q8MR45"/>
<dbReference type="Reactome" id="R-DME-6798695">
    <property type="pathway name" value="Neutrophil degranulation"/>
</dbReference>
<dbReference type="BioGRID-ORCS" id="35989">
    <property type="hits" value="0 hits in 1 CRISPR screen"/>
</dbReference>
<dbReference type="GenomeRNAi" id="35989"/>
<dbReference type="PRO" id="PR:Q8MR45"/>
<dbReference type="Proteomes" id="UP000000803">
    <property type="component" value="Chromosome 2R"/>
</dbReference>
<dbReference type="Bgee" id="FBgn0033431">
    <property type="expression patterns" value="Expressed in seminal fluid secreting gland and 95 other cell types or tissues"/>
</dbReference>
<dbReference type="GO" id="GO:0005737">
    <property type="term" value="C:cytoplasm"/>
    <property type="evidence" value="ECO:0000318"/>
    <property type="project" value="GO_Central"/>
</dbReference>
<dbReference type="GO" id="GO:0005764">
    <property type="term" value="C:lysosome"/>
    <property type="evidence" value="ECO:0000250"/>
    <property type="project" value="UniProtKB"/>
</dbReference>
<dbReference type="GO" id="GO:0003948">
    <property type="term" value="F:N4-(beta-N-acetylglucosaminyl)-L-asparaginase activity"/>
    <property type="evidence" value="ECO:0000250"/>
    <property type="project" value="UniProtKB"/>
</dbReference>
<dbReference type="GO" id="GO:0008233">
    <property type="term" value="F:peptidase activity"/>
    <property type="evidence" value="ECO:0007669"/>
    <property type="project" value="UniProtKB-KW"/>
</dbReference>
<dbReference type="GO" id="GO:0006517">
    <property type="term" value="P:protein deglycosylation"/>
    <property type="evidence" value="ECO:0000250"/>
    <property type="project" value="UniProtKB"/>
</dbReference>
<dbReference type="GO" id="GO:0006508">
    <property type="term" value="P:proteolysis"/>
    <property type="evidence" value="ECO:0007669"/>
    <property type="project" value="UniProtKB-KW"/>
</dbReference>
<dbReference type="CDD" id="cd04513">
    <property type="entry name" value="Glycosylasparaginase"/>
    <property type="match status" value="1"/>
</dbReference>
<dbReference type="FunFam" id="3.60.20.30:FF:000003">
    <property type="entry name" value="N(4)-(Beta-N-acetylglucosaminyl)-L-asparaginase isoform X1"/>
    <property type="match status" value="1"/>
</dbReference>
<dbReference type="Gene3D" id="3.60.20.30">
    <property type="entry name" value="(Glycosyl)asparaginase"/>
    <property type="match status" value="1"/>
</dbReference>
<dbReference type="InterPro" id="IPR029055">
    <property type="entry name" value="Ntn_hydrolases_N"/>
</dbReference>
<dbReference type="InterPro" id="IPR000246">
    <property type="entry name" value="Peptidase_T2"/>
</dbReference>
<dbReference type="PANTHER" id="PTHR10188">
    <property type="entry name" value="L-ASPARAGINASE"/>
    <property type="match status" value="1"/>
</dbReference>
<dbReference type="PANTHER" id="PTHR10188:SF6">
    <property type="entry name" value="N(4)-(BETA-N-ACETYLGLUCOSAMINYL)-L-ASPARAGINASE"/>
    <property type="match status" value="1"/>
</dbReference>
<dbReference type="Pfam" id="PF01112">
    <property type="entry name" value="Asparaginase_2"/>
    <property type="match status" value="1"/>
</dbReference>
<dbReference type="SUPFAM" id="SSF56235">
    <property type="entry name" value="N-terminal nucleophile aminohydrolases (Ntn hydrolases)"/>
    <property type="match status" value="1"/>
</dbReference>
<proteinExistence type="evidence at transcript level"/>
<comment type="function">
    <text evidence="2">Cleaves the GlcNAc-Asn bond which joins oligosaccharides to the peptide of asparagine-linked glycoproteins.</text>
</comment>
<comment type="catalytic activity">
    <reaction evidence="2">
        <text>N(4)-(beta-N-acetyl-D-glucosaminyl)-L-asparagine + H2O = N-acetyl-beta-D-glucosaminylamine + L-aspartate + H(+)</text>
        <dbReference type="Rhea" id="RHEA:11544"/>
        <dbReference type="ChEBI" id="CHEBI:15377"/>
        <dbReference type="ChEBI" id="CHEBI:15378"/>
        <dbReference type="ChEBI" id="CHEBI:15947"/>
        <dbReference type="ChEBI" id="CHEBI:29991"/>
        <dbReference type="ChEBI" id="CHEBI:58080"/>
        <dbReference type="EC" id="3.5.1.26"/>
    </reaction>
</comment>
<comment type="subunit">
    <text evidence="2">Heterotetramer of two alpha and two beta chains arranged as a dimer of alpha/beta heterodimers.</text>
</comment>
<comment type="PTM">
    <text evidence="1">Cleaved into an alpha and beta chain by autocatalysis; this activates the enzyme. The N-terminal residue of the beta subunit is responsible for the nucleophile hydrolase activity (By similarity).</text>
</comment>
<comment type="similarity">
    <text evidence="3">Belongs to the Ntn-hydrolase family.</text>
</comment>
<comment type="sequence caution" evidence="5">
    <conflict type="miscellaneous discrepancy">
        <sequence resource="EMBL-CDS" id="AAR96196"/>
    </conflict>
    <text>Intron retention.</text>
</comment>
<gene>
    <name type="ORF">CG1827</name>
</gene>
<name>ASPG1_DROME</name>
<keyword id="KW-0068">Autocatalytic cleavage</keyword>
<keyword id="KW-1015">Disulfide bond</keyword>
<keyword id="KW-0325">Glycoprotein</keyword>
<keyword id="KW-0378">Hydrolase</keyword>
<keyword id="KW-0645">Protease</keyword>
<keyword id="KW-1185">Reference proteome</keyword>
<keyword id="KW-0732">Signal</keyword>
<evidence type="ECO:0000250" key="1"/>
<evidence type="ECO:0000250" key="2">
    <source>
        <dbReference type="UniProtKB" id="P20933"/>
    </source>
</evidence>
<evidence type="ECO:0000255" key="3"/>
<evidence type="ECO:0000269" key="4">
    <source>
    </source>
</evidence>
<evidence type="ECO:0000305" key="5"/>
<evidence type="ECO:0000312" key="6">
    <source>
        <dbReference type="EMBL" id="AAF58918.5"/>
    </source>
</evidence>
<evidence type="ECO:0000312" key="7">
    <source>
        <dbReference type="EMBL" id="AAM52645.1"/>
    </source>
</evidence>
<evidence type="ECO:0000312" key="8">
    <source>
        <dbReference type="EMBL" id="AAR96196.1"/>
    </source>
</evidence>
<feature type="signal peptide" evidence="3">
    <location>
        <begin position="1"/>
        <end position="23"/>
    </location>
</feature>
<feature type="chain" id="PRO_0000384129" description="Glycosylasparaginase alpha chain" evidence="2">
    <location>
        <begin position="24"/>
        <end position="242"/>
    </location>
</feature>
<feature type="chain" id="PRO_0000384130" description="Glycosylasparaginase beta chain" evidence="2">
    <location>
        <begin position="243"/>
        <end position="393"/>
    </location>
</feature>
<feature type="active site" description="Nucleophile" evidence="2">
    <location>
        <position position="243"/>
    </location>
</feature>
<feature type="binding site" evidence="1">
    <location>
        <begin position="271"/>
        <end position="274"/>
    </location>
    <ligand>
        <name>substrate</name>
    </ligand>
</feature>
<feature type="binding site" evidence="1">
    <location>
        <begin position="294"/>
        <end position="297"/>
    </location>
    <ligand>
        <name>substrate</name>
    </ligand>
</feature>
<feature type="glycosylation site" description="N-linked (GlcNAc...) asparagine" evidence="3">
    <location>
        <position position="49"/>
    </location>
</feature>
<feature type="glycosylation site" description="N-linked (GlcNAc...) asparagine" evidence="3">
    <location>
        <position position="64"/>
    </location>
</feature>
<feature type="disulfide bond" evidence="2">
    <location>
        <begin position="97"/>
        <end position="102"/>
    </location>
</feature>
<feature type="disulfide bond" evidence="2">
    <location>
        <begin position="196"/>
        <end position="212"/>
    </location>
</feature>
<feature type="disulfide bond" evidence="2">
    <location>
        <begin position="354"/>
        <end position="381"/>
    </location>
</feature>
<feature type="sequence conflict" description="In Ref. 4; AAR96196." evidence="5" ref="4">
    <original>A</original>
    <variation>G</variation>
    <location>
        <position position="370"/>
    </location>
</feature>
<reference evidence="6" key="1">
    <citation type="journal article" date="2000" name="Science">
        <title>The genome sequence of Drosophila melanogaster.</title>
        <authorList>
            <person name="Adams M.D."/>
            <person name="Celniker S.E."/>
            <person name="Holt R.A."/>
            <person name="Evans C.A."/>
            <person name="Gocayne J.D."/>
            <person name="Amanatides P.G."/>
            <person name="Scherer S.E."/>
            <person name="Li P.W."/>
            <person name="Hoskins R.A."/>
            <person name="Galle R.F."/>
            <person name="George R.A."/>
            <person name="Lewis S.E."/>
            <person name="Richards S."/>
            <person name="Ashburner M."/>
            <person name="Henderson S.N."/>
            <person name="Sutton G.G."/>
            <person name="Wortman J.R."/>
            <person name="Yandell M.D."/>
            <person name="Zhang Q."/>
            <person name="Chen L.X."/>
            <person name="Brandon R.C."/>
            <person name="Rogers Y.-H.C."/>
            <person name="Blazej R.G."/>
            <person name="Champe M."/>
            <person name="Pfeiffer B.D."/>
            <person name="Wan K.H."/>
            <person name="Doyle C."/>
            <person name="Baxter E.G."/>
            <person name="Helt G."/>
            <person name="Nelson C.R."/>
            <person name="Miklos G.L.G."/>
            <person name="Abril J.F."/>
            <person name="Agbayani A."/>
            <person name="An H.-J."/>
            <person name="Andrews-Pfannkoch C."/>
            <person name="Baldwin D."/>
            <person name="Ballew R.M."/>
            <person name="Basu A."/>
            <person name="Baxendale J."/>
            <person name="Bayraktaroglu L."/>
            <person name="Beasley E.M."/>
            <person name="Beeson K.Y."/>
            <person name="Benos P.V."/>
            <person name="Berman B.P."/>
            <person name="Bhandari D."/>
            <person name="Bolshakov S."/>
            <person name="Borkova D."/>
            <person name="Botchan M.R."/>
            <person name="Bouck J."/>
            <person name="Brokstein P."/>
            <person name="Brottier P."/>
            <person name="Burtis K.C."/>
            <person name="Busam D.A."/>
            <person name="Butler H."/>
            <person name="Cadieu E."/>
            <person name="Center A."/>
            <person name="Chandra I."/>
            <person name="Cherry J.M."/>
            <person name="Cawley S."/>
            <person name="Dahlke C."/>
            <person name="Davenport L.B."/>
            <person name="Davies P."/>
            <person name="de Pablos B."/>
            <person name="Delcher A."/>
            <person name="Deng Z."/>
            <person name="Mays A.D."/>
            <person name="Dew I."/>
            <person name="Dietz S.M."/>
            <person name="Dodson K."/>
            <person name="Doup L.E."/>
            <person name="Downes M."/>
            <person name="Dugan-Rocha S."/>
            <person name="Dunkov B.C."/>
            <person name="Dunn P."/>
            <person name="Durbin K.J."/>
            <person name="Evangelista C.C."/>
            <person name="Ferraz C."/>
            <person name="Ferriera S."/>
            <person name="Fleischmann W."/>
            <person name="Fosler C."/>
            <person name="Gabrielian A.E."/>
            <person name="Garg N.S."/>
            <person name="Gelbart W.M."/>
            <person name="Glasser K."/>
            <person name="Glodek A."/>
            <person name="Gong F."/>
            <person name="Gorrell J.H."/>
            <person name="Gu Z."/>
            <person name="Guan P."/>
            <person name="Harris M."/>
            <person name="Harris N.L."/>
            <person name="Harvey D.A."/>
            <person name="Heiman T.J."/>
            <person name="Hernandez J.R."/>
            <person name="Houck J."/>
            <person name="Hostin D."/>
            <person name="Houston K.A."/>
            <person name="Howland T.J."/>
            <person name="Wei M.-H."/>
            <person name="Ibegwam C."/>
            <person name="Jalali M."/>
            <person name="Kalush F."/>
            <person name="Karpen G.H."/>
            <person name="Ke Z."/>
            <person name="Kennison J.A."/>
            <person name="Ketchum K.A."/>
            <person name="Kimmel B.E."/>
            <person name="Kodira C.D."/>
            <person name="Kraft C.L."/>
            <person name="Kravitz S."/>
            <person name="Kulp D."/>
            <person name="Lai Z."/>
            <person name="Lasko P."/>
            <person name="Lei Y."/>
            <person name="Levitsky A.A."/>
            <person name="Li J.H."/>
            <person name="Li Z."/>
            <person name="Liang Y."/>
            <person name="Lin X."/>
            <person name="Liu X."/>
            <person name="Mattei B."/>
            <person name="McIntosh T.C."/>
            <person name="McLeod M.P."/>
            <person name="McPherson D."/>
            <person name="Merkulov G."/>
            <person name="Milshina N.V."/>
            <person name="Mobarry C."/>
            <person name="Morris J."/>
            <person name="Moshrefi A."/>
            <person name="Mount S.M."/>
            <person name="Moy M."/>
            <person name="Murphy B."/>
            <person name="Murphy L."/>
            <person name="Muzny D.M."/>
            <person name="Nelson D.L."/>
            <person name="Nelson D.R."/>
            <person name="Nelson K.A."/>
            <person name="Nixon K."/>
            <person name="Nusskern D.R."/>
            <person name="Pacleb J.M."/>
            <person name="Palazzolo M."/>
            <person name="Pittman G.S."/>
            <person name="Pan S."/>
            <person name="Pollard J."/>
            <person name="Puri V."/>
            <person name="Reese M.G."/>
            <person name="Reinert K."/>
            <person name="Remington K."/>
            <person name="Saunders R.D.C."/>
            <person name="Scheeler F."/>
            <person name="Shen H."/>
            <person name="Shue B.C."/>
            <person name="Siden-Kiamos I."/>
            <person name="Simpson M."/>
            <person name="Skupski M.P."/>
            <person name="Smith T.J."/>
            <person name="Spier E."/>
            <person name="Spradling A.C."/>
            <person name="Stapleton M."/>
            <person name="Strong R."/>
            <person name="Sun E."/>
            <person name="Svirskas R."/>
            <person name="Tector C."/>
            <person name="Turner R."/>
            <person name="Venter E."/>
            <person name="Wang A.H."/>
            <person name="Wang X."/>
            <person name="Wang Z.-Y."/>
            <person name="Wassarman D.A."/>
            <person name="Weinstock G.M."/>
            <person name="Weissenbach J."/>
            <person name="Williams S.M."/>
            <person name="Woodage T."/>
            <person name="Worley K.C."/>
            <person name="Wu D."/>
            <person name="Yang S."/>
            <person name="Yao Q.A."/>
            <person name="Ye J."/>
            <person name="Yeh R.-F."/>
            <person name="Zaveri J.S."/>
            <person name="Zhan M."/>
            <person name="Zhang G."/>
            <person name="Zhao Q."/>
            <person name="Zheng L."/>
            <person name="Zheng X.H."/>
            <person name="Zhong F.N."/>
            <person name="Zhong W."/>
            <person name="Zhou X."/>
            <person name="Zhu S.C."/>
            <person name="Zhu X."/>
            <person name="Smith H.O."/>
            <person name="Gibbs R.A."/>
            <person name="Myers E.W."/>
            <person name="Rubin G.M."/>
            <person name="Venter J.C."/>
        </authorList>
    </citation>
    <scope>NUCLEOTIDE SEQUENCE [LARGE SCALE GENOMIC DNA]</scope>
    <source>
        <strain>Berkeley</strain>
    </source>
</reference>
<reference evidence="5 6" key="2">
    <citation type="journal article" date="2002" name="Genome Biol.">
        <title>Annotation of the Drosophila melanogaster euchromatic genome: a systematic review.</title>
        <authorList>
            <person name="Misra S."/>
            <person name="Crosby M.A."/>
            <person name="Mungall C.J."/>
            <person name="Matthews B.B."/>
            <person name="Campbell K.S."/>
            <person name="Hradecky P."/>
            <person name="Huang Y."/>
            <person name="Kaminker J.S."/>
            <person name="Millburn G.H."/>
            <person name="Prochnik S.E."/>
            <person name="Smith C.D."/>
            <person name="Tupy J.L."/>
            <person name="Whitfield E.J."/>
            <person name="Bayraktaroglu L."/>
            <person name="Berman B.P."/>
            <person name="Bettencourt B.R."/>
            <person name="Celniker S.E."/>
            <person name="de Grey A.D.N.J."/>
            <person name="Drysdale R.A."/>
            <person name="Harris N.L."/>
            <person name="Richter J."/>
            <person name="Russo S."/>
            <person name="Schroeder A.J."/>
            <person name="Shu S.Q."/>
            <person name="Stapleton M."/>
            <person name="Yamada C."/>
            <person name="Ashburner M."/>
            <person name="Gelbart W.M."/>
            <person name="Rubin G.M."/>
            <person name="Lewis S.E."/>
        </authorList>
    </citation>
    <scope>GENOME REANNOTATION</scope>
    <source>
        <strain>Berkeley</strain>
    </source>
</reference>
<reference evidence="5 7" key="3">
    <citation type="journal article" date="2002" name="Genome Biol.">
        <title>A Drosophila full-length cDNA resource.</title>
        <authorList>
            <person name="Stapleton M."/>
            <person name="Carlson J.W."/>
            <person name="Brokstein P."/>
            <person name="Yu C."/>
            <person name="Champe M."/>
            <person name="George R.A."/>
            <person name="Guarin H."/>
            <person name="Kronmiller B."/>
            <person name="Pacleb J.M."/>
            <person name="Park S."/>
            <person name="Wan K.H."/>
            <person name="Rubin G.M."/>
            <person name="Celniker S.E."/>
        </authorList>
    </citation>
    <scope>NUCLEOTIDE SEQUENCE [LARGE SCALE MRNA]</scope>
    <source>
        <strain evidence="7">Berkeley</strain>
        <tissue evidence="4">Head</tissue>
    </source>
</reference>
<reference evidence="5 8" key="4">
    <citation type="submission" date="2004-01" db="EMBL/GenBank/DDBJ databases">
        <authorList>
            <person name="Stapleton M."/>
            <person name="Carlson J.W."/>
            <person name="Chavez C."/>
            <person name="Frise E."/>
            <person name="George R.A."/>
            <person name="Pacleb J.M."/>
            <person name="Park S."/>
            <person name="Wan K.H."/>
            <person name="Yu C."/>
            <person name="Rubin G.M."/>
            <person name="Celniker S.E."/>
        </authorList>
    </citation>
    <scope>NUCLEOTIDE SEQUENCE [LARGE SCALE MRNA]</scope>
    <source>
        <strain>Berkeley</strain>
        <tissue>Testis</tissue>
    </source>
</reference>
<protein>
    <recommendedName>
        <fullName>Putative N(4)-(beta-N-acetylglucosaminyl)-L-asparaginase CG1827</fullName>
        <ecNumber>3.5.1.26</ecNumber>
    </recommendedName>
    <alternativeName>
        <fullName evidence="2">Aspartylglucosaminidase</fullName>
        <shortName evidence="2">AGA</shortName>
    </alternativeName>
    <alternativeName>
        <fullName evidence="2">Glycosylasparaginase</fullName>
    </alternativeName>
    <alternativeName>
        <fullName evidence="2">N4-(N-acetyl-beta-glucosaminyl)-L-asparagine amidase</fullName>
    </alternativeName>
    <component>
        <recommendedName>
            <fullName evidence="2">Glycosylasparaginase alpha chain</fullName>
        </recommendedName>
    </component>
    <component>
        <recommendedName>
            <fullName evidence="2">Glycosylasparaginase beta chain</fullName>
        </recommendedName>
    </component>
</protein>
<organism>
    <name type="scientific">Drosophila melanogaster</name>
    <name type="common">Fruit fly</name>
    <dbReference type="NCBI Taxonomy" id="7227"/>
    <lineage>
        <taxon>Eukaryota</taxon>
        <taxon>Metazoa</taxon>
        <taxon>Ecdysozoa</taxon>
        <taxon>Arthropoda</taxon>
        <taxon>Hexapoda</taxon>
        <taxon>Insecta</taxon>
        <taxon>Pterygota</taxon>
        <taxon>Neoptera</taxon>
        <taxon>Endopterygota</taxon>
        <taxon>Diptera</taxon>
        <taxon>Brachycera</taxon>
        <taxon>Muscomorpha</taxon>
        <taxon>Ephydroidea</taxon>
        <taxon>Drosophilidae</taxon>
        <taxon>Drosophila</taxon>
        <taxon>Sophophora</taxon>
    </lineage>
</organism>
<accession>Q8MR45</accession>
<accession>A1Z7W5</accession>
<accession>A1Z7W6</accession>
<accession>Q6NN89</accession>
<sequence length="393" mass="42240">MRRHLRASLWILCLATMAFSILAAVNTSPKPTLTSAFSGKAGTTAVKANKTTGELLPMVINTWNFTAANVLAWRILKQSKGGLRQTRNAVVEGCSKCEKLQCDRTVGYGGSPDELGETTLDAMVMDGATMDVGAVAGLRRIKDAIKVARHVLEHTQHTMLVGDAASAFANAMGFESESLVTPESKDMWLQWTAENCQPNFWKNVHPDPKVSCGPYKPRPTPLTRWKEDRARNEYEIGRKNHDTIGMIAIDVESNIHAGTSTNGARHKIPGRVGDSPIPGAGAYADNEVGAAVATGDGDVMMRFLPSLLAVETMRAGKPPAEAAQEGLRRILKHHKDFMGALIAVDRLGNYGAACYGLAEFPFMVSSPAGADGPTRLETVKCIGGQDKVNIVAL</sequence>